<sequence length="70" mass="8224">MAKDNIHPNWYPEAKVYCDGQLIMTIGSTKPELHVDIWSGNHPFFTGSQRIIDTEGRVERFMRKYKINKN</sequence>
<protein>
    <recommendedName>
        <fullName evidence="1">Large ribosomal subunit protein bL31c</fullName>
    </recommendedName>
    <alternativeName>
        <fullName evidence="2">50S ribosomal protein L31, chloroplastic</fullName>
    </alternativeName>
</protein>
<organism>
    <name type="scientific">Pyropia yezoensis</name>
    <name type="common">Susabi-nori</name>
    <name type="synonym">Porphyra yezoensis</name>
    <dbReference type="NCBI Taxonomy" id="2788"/>
    <lineage>
        <taxon>Eukaryota</taxon>
        <taxon>Rhodophyta</taxon>
        <taxon>Bangiophyceae</taxon>
        <taxon>Bangiales</taxon>
        <taxon>Bangiaceae</taxon>
        <taxon>Pyropia</taxon>
    </lineage>
</organism>
<comment type="function">
    <text evidence="1">Binds the 23S rRNA.</text>
</comment>
<comment type="subunit">
    <text evidence="1">Part of the 50S ribosomal subunit.</text>
</comment>
<comment type="subcellular location">
    <subcellularLocation>
        <location>Plastid</location>
        <location>Chloroplast</location>
    </subcellularLocation>
</comment>
<comment type="similarity">
    <text evidence="1">Belongs to the bacterial ribosomal protein bL31 family. Type A subfamily.</text>
</comment>
<proteinExistence type="inferred from homology"/>
<reference key="1">
    <citation type="submission" date="2006-09" db="EMBL/GenBank/DDBJ databases">
        <title>Cloning and analysis of the Porphyra yezoensis gene for rpl31.</title>
        <authorList>
            <person name="Wang M.Q."/>
            <person name="Mao Y.X."/>
        </authorList>
    </citation>
    <scope>NUCLEOTIDE SEQUENCE [GENOMIC DNA]</scope>
    <source>
        <strain>Qingdao</strain>
    </source>
</reference>
<reference key="2">
    <citation type="submission" date="2003-11" db="EMBL/GenBank/DDBJ databases">
        <title>Whole genome sequence of Porphyra yezoensis chloroplast.</title>
        <authorList>
            <person name="Kunimoto M."/>
            <person name="Morishima K."/>
            <person name="Yoshikawa M."/>
            <person name="Fukuda S."/>
            <person name="Kobayashi T."/>
            <person name="Kobayashi M."/>
            <person name="Okazaki T."/>
            <person name="Ohara I."/>
            <person name="Nakayama I."/>
        </authorList>
    </citation>
    <scope>NUCLEOTIDE SEQUENCE [LARGE SCALE GENOMIC DNA]</scope>
    <source>
        <strain>U-51</strain>
    </source>
</reference>
<dbReference type="EMBL" id="DQ995208">
    <property type="protein sequence ID" value="ABJ91323.1"/>
    <property type="molecule type" value="Genomic_DNA"/>
</dbReference>
<dbReference type="EMBL" id="AP006715">
    <property type="protein sequence ID" value="BAE92413.1"/>
    <property type="molecule type" value="Genomic_DNA"/>
</dbReference>
<dbReference type="RefSeq" id="YP_536970.1">
    <property type="nucleotide sequence ID" value="NC_007932.1"/>
</dbReference>
<dbReference type="GeneID" id="3978919"/>
<dbReference type="GO" id="GO:0009507">
    <property type="term" value="C:chloroplast"/>
    <property type="evidence" value="ECO:0007669"/>
    <property type="project" value="UniProtKB-SubCell"/>
</dbReference>
<dbReference type="GO" id="GO:1990904">
    <property type="term" value="C:ribonucleoprotein complex"/>
    <property type="evidence" value="ECO:0007669"/>
    <property type="project" value="UniProtKB-KW"/>
</dbReference>
<dbReference type="GO" id="GO:0005840">
    <property type="term" value="C:ribosome"/>
    <property type="evidence" value="ECO:0007669"/>
    <property type="project" value="UniProtKB-KW"/>
</dbReference>
<dbReference type="GO" id="GO:0019843">
    <property type="term" value="F:rRNA binding"/>
    <property type="evidence" value="ECO:0007669"/>
    <property type="project" value="UniProtKB-KW"/>
</dbReference>
<dbReference type="GO" id="GO:0003735">
    <property type="term" value="F:structural constituent of ribosome"/>
    <property type="evidence" value="ECO:0007669"/>
    <property type="project" value="InterPro"/>
</dbReference>
<dbReference type="GO" id="GO:0006412">
    <property type="term" value="P:translation"/>
    <property type="evidence" value="ECO:0007669"/>
    <property type="project" value="UniProtKB-UniRule"/>
</dbReference>
<dbReference type="Gene3D" id="4.10.830.30">
    <property type="entry name" value="Ribosomal protein L31"/>
    <property type="match status" value="1"/>
</dbReference>
<dbReference type="HAMAP" id="MF_00501">
    <property type="entry name" value="Ribosomal_bL31_1"/>
    <property type="match status" value="1"/>
</dbReference>
<dbReference type="InterPro" id="IPR034704">
    <property type="entry name" value="Ribosomal_bL28/bL31-like_sf"/>
</dbReference>
<dbReference type="InterPro" id="IPR002150">
    <property type="entry name" value="Ribosomal_bL31"/>
</dbReference>
<dbReference type="InterPro" id="IPR027491">
    <property type="entry name" value="Ribosomal_bL31_A"/>
</dbReference>
<dbReference type="InterPro" id="IPR042105">
    <property type="entry name" value="Ribosomal_bL31_sf"/>
</dbReference>
<dbReference type="NCBIfam" id="TIGR00105">
    <property type="entry name" value="L31"/>
    <property type="match status" value="1"/>
</dbReference>
<dbReference type="NCBIfam" id="NF001809">
    <property type="entry name" value="PRK00528.1"/>
    <property type="match status" value="1"/>
</dbReference>
<dbReference type="PANTHER" id="PTHR33280">
    <property type="entry name" value="50S RIBOSOMAL PROTEIN L31, CHLOROPLASTIC"/>
    <property type="match status" value="1"/>
</dbReference>
<dbReference type="PANTHER" id="PTHR33280:SF1">
    <property type="entry name" value="LARGE RIBOSOMAL SUBUNIT PROTEIN BL31C"/>
    <property type="match status" value="1"/>
</dbReference>
<dbReference type="Pfam" id="PF01197">
    <property type="entry name" value="Ribosomal_L31"/>
    <property type="match status" value="1"/>
</dbReference>
<dbReference type="PRINTS" id="PR01249">
    <property type="entry name" value="RIBOSOMALL31"/>
</dbReference>
<dbReference type="SUPFAM" id="SSF143800">
    <property type="entry name" value="L28p-like"/>
    <property type="match status" value="1"/>
</dbReference>
<dbReference type="PROSITE" id="PS01143">
    <property type="entry name" value="RIBOSOMAL_L31"/>
    <property type="match status" value="1"/>
</dbReference>
<keyword id="KW-0150">Chloroplast</keyword>
<keyword id="KW-0934">Plastid</keyword>
<keyword id="KW-0687">Ribonucleoprotein</keyword>
<keyword id="KW-0689">Ribosomal protein</keyword>
<keyword id="KW-0694">RNA-binding</keyword>
<keyword id="KW-0699">rRNA-binding</keyword>
<accession>Q1XDJ8</accession>
<accession>A0MMB5</accession>
<geneLocation type="chloroplast"/>
<feature type="chain" id="PRO_0000259246" description="Large ribosomal subunit protein bL31c">
    <location>
        <begin position="1"/>
        <end position="70"/>
    </location>
</feature>
<gene>
    <name evidence="1" type="primary">rpl31</name>
</gene>
<name>RK31_PYRYE</name>
<evidence type="ECO:0000255" key="1">
    <source>
        <dbReference type="HAMAP-Rule" id="MF_00501"/>
    </source>
</evidence>
<evidence type="ECO:0000305" key="2"/>